<organism>
    <name type="scientific">Phycomyces blakesleeanus (strain ATCC 8743b / DSM 1359 / FGSC 10004 / NBRC 33097 / NRRL 1555)</name>
    <dbReference type="NCBI Taxonomy" id="763407"/>
    <lineage>
        <taxon>Eukaryota</taxon>
        <taxon>Fungi</taxon>
        <taxon>Fungi incertae sedis</taxon>
        <taxon>Mucoromycota</taxon>
        <taxon>Mucoromycotina</taxon>
        <taxon>Mucoromycetes</taxon>
        <taxon>Mucorales</taxon>
        <taxon>Phycomycetaceae</taxon>
        <taxon>Phycomyces</taxon>
    </lineage>
</organism>
<comment type="function">
    <text>Serine/threonine protein kinase that probably participates as an intermediate in an intracellular system controlling nuclear proliferation.</text>
</comment>
<comment type="catalytic activity">
    <reaction>
        <text>L-seryl-[protein] + ATP = O-phospho-L-seryl-[protein] + ADP + H(+)</text>
        <dbReference type="Rhea" id="RHEA:17989"/>
        <dbReference type="Rhea" id="RHEA-COMP:9863"/>
        <dbReference type="Rhea" id="RHEA-COMP:11604"/>
        <dbReference type="ChEBI" id="CHEBI:15378"/>
        <dbReference type="ChEBI" id="CHEBI:29999"/>
        <dbReference type="ChEBI" id="CHEBI:30616"/>
        <dbReference type="ChEBI" id="CHEBI:83421"/>
        <dbReference type="ChEBI" id="CHEBI:456216"/>
        <dbReference type="EC" id="2.7.11.1"/>
    </reaction>
</comment>
<comment type="catalytic activity">
    <reaction>
        <text>L-threonyl-[protein] + ATP = O-phospho-L-threonyl-[protein] + ADP + H(+)</text>
        <dbReference type="Rhea" id="RHEA:46608"/>
        <dbReference type="Rhea" id="RHEA-COMP:11060"/>
        <dbReference type="Rhea" id="RHEA-COMP:11605"/>
        <dbReference type="ChEBI" id="CHEBI:15378"/>
        <dbReference type="ChEBI" id="CHEBI:30013"/>
        <dbReference type="ChEBI" id="CHEBI:30616"/>
        <dbReference type="ChEBI" id="CHEBI:61977"/>
        <dbReference type="ChEBI" id="CHEBI:456216"/>
        <dbReference type="EC" id="2.7.11.1"/>
    </reaction>
</comment>
<comment type="developmental stage">
    <text>Mainly expressed during the vegetative growth, the level decreased when the mycelium can differentiate and form sporangiophores.</text>
</comment>
<comment type="similarity">
    <text evidence="1">Belongs to the protein kinase superfamily. Ser/Thr protein kinase family.</text>
</comment>
<proteinExistence type="evidence at transcript level"/>
<keyword id="KW-0067">ATP-binding</keyword>
<keyword id="KW-0418">Kinase</keyword>
<keyword id="KW-0547">Nucleotide-binding</keyword>
<keyword id="KW-0723">Serine/threonine-protein kinase</keyword>
<keyword id="KW-0808">Transferase</keyword>
<reference key="1">
    <citation type="journal article" date="1995" name="Curr. Genet.">
        <title>PkpA, a novel Phycomyces blakesleeanus serine/threonine protein kinase.</title>
        <authorList>
            <person name="Ruiz-Perez V.L."/>
            <person name="Murillo F.J."/>
            <person name="Torres-Martinez S."/>
        </authorList>
    </citation>
    <scope>NUCLEOTIDE SEQUENCE [GENOMIC DNA]</scope>
    <source>
        <strain>ATCC 8743b / DSM 1359 / FGSC 10004 / NBRC 33097 / NRRL 1555</strain>
    </source>
</reference>
<gene>
    <name type="primary">pkpA</name>
</gene>
<protein>
    <recommendedName>
        <fullName>Serine/threonine-protein kinase pkpA</fullName>
        <ecNumber>2.7.11.1</ecNumber>
    </recommendedName>
</protein>
<accession>Q01577</accession>
<feature type="chain" id="PRO_0000086555" description="Serine/threonine-protein kinase pkpA">
    <location>
        <begin position="1"/>
        <end position="613"/>
    </location>
</feature>
<feature type="domain" description="Protein kinase" evidence="1">
    <location>
        <begin position="17"/>
        <end position="269"/>
    </location>
</feature>
<feature type="region of interest" description="Disordered" evidence="3">
    <location>
        <begin position="424"/>
        <end position="475"/>
    </location>
</feature>
<feature type="region of interest" description="Disordered" evidence="3">
    <location>
        <begin position="589"/>
        <end position="613"/>
    </location>
</feature>
<feature type="compositionally biased region" description="Pro residues" evidence="3">
    <location>
        <begin position="427"/>
        <end position="441"/>
    </location>
</feature>
<feature type="compositionally biased region" description="Low complexity" evidence="3">
    <location>
        <begin position="442"/>
        <end position="475"/>
    </location>
</feature>
<feature type="compositionally biased region" description="Polar residues" evidence="3">
    <location>
        <begin position="592"/>
        <end position="602"/>
    </location>
</feature>
<feature type="active site" description="Proton acceptor" evidence="1 2">
    <location>
        <position position="140"/>
    </location>
</feature>
<feature type="binding site" evidence="1">
    <location>
        <begin position="23"/>
        <end position="31"/>
    </location>
    <ligand>
        <name>ATP</name>
        <dbReference type="ChEBI" id="CHEBI:30616"/>
    </ligand>
</feature>
<feature type="binding site" evidence="1">
    <location>
        <position position="50"/>
    </location>
    <ligand>
        <name>ATP</name>
        <dbReference type="ChEBI" id="CHEBI:30616"/>
    </ligand>
</feature>
<name>PKPA_PHYB8</name>
<dbReference type="EC" id="2.7.11.1"/>
<dbReference type="EMBL" id="Z46636">
    <property type="protein sequence ID" value="CAA86606.1"/>
    <property type="molecule type" value="Genomic_DNA"/>
</dbReference>
<dbReference type="SMR" id="Q01577"/>
<dbReference type="VEuPathDB" id="FungiDB:PHYBLDRAFT_154941"/>
<dbReference type="GO" id="GO:0005524">
    <property type="term" value="F:ATP binding"/>
    <property type="evidence" value="ECO:0007669"/>
    <property type="project" value="UniProtKB-KW"/>
</dbReference>
<dbReference type="GO" id="GO:0106310">
    <property type="term" value="F:protein serine kinase activity"/>
    <property type="evidence" value="ECO:0007669"/>
    <property type="project" value="RHEA"/>
</dbReference>
<dbReference type="GO" id="GO:0004674">
    <property type="term" value="F:protein serine/threonine kinase activity"/>
    <property type="evidence" value="ECO:0007669"/>
    <property type="project" value="UniProtKB-KW"/>
</dbReference>
<dbReference type="CDD" id="cd13983">
    <property type="entry name" value="STKc_WNK"/>
    <property type="match status" value="1"/>
</dbReference>
<dbReference type="FunFam" id="1.10.510.10:FF:001565">
    <property type="entry name" value="WNK protein kinase"/>
    <property type="match status" value="1"/>
</dbReference>
<dbReference type="Gene3D" id="3.10.20.90">
    <property type="entry name" value="Phosphatidylinositol 3-kinase Catalytic Subunit, Chain A, domain 1"/>
    <property type="match status" value="1"/>
</dbReference>
<dbReference type="Gene3D" id="3.30.200.20">
    <property type="entry name" value="Phosphorylase Kinase, domain 1"/>
    <property type="match status" value="1"/>
</dbReference>
<dbReference type="Gene3D" id="1.10.510.10">
    <property type="entry name" value="Transferase(Phosphotransferase) domain 1"/>
    <property type="match status" value="1"/>
</dbReference>
<dbReference type="InterPro" id="IPR011009">
    <property type="entry name" value="Kinase-like_dom_sf"/>
</dbReference>
<dbReference type="InterPro" id="IPR000719">
    <property type="entry name" value="Prot_kinase_dom"/>
</dbReference>
<dbReference type="InterPro" id="IPR008271">
    <property type="entry name" value="Ser/Thr_kinase_AS"/>
</dbReference>
<dbReference type="InterPro" id="IPR050588">
    <property type="entry name" value="WNK_Ser-Thr_kinase"/>
</dbReference>
<dbReference type="PANTHER" id="PTHR13902">
    <property type="entry name" value="SERINE/THREONINE-PROTEIN KINASE WNK WITH NO LYSINE -RELATED"/>
    <property type="match status" value="1"/>
</dbReference>
<dbReference type="Pfam" id="PF00069">
    <property type="entry name" value="Pkinase"/>
    <property type="match status" value="1"/>
</dbReference>
<dbReference type="SMART" id="SM00220">
    <property type="entry name" value="S_TKc"/>
    <property type="match status" value="1"/>
</dbReference>
<dbReference type="SUPFAM" id="SSF56112">
    <property type="entry name" value="Protein kinase-like (PK-like)"/>
    <property type="match status" value="1"/>
</dbReference>
<dbReference type="PROSITE" id="PS50011">
    <property type="entry name" value="PROTEIN_KINASE_DOM"/>
    <property type="match status" value="1"/>
</dbReference>
<dbReference type="PROSITE" id="PS00108">
    <property type="entry name" value="PROTEIN_KINASE_ST"/>
    <property type="match status" value="1"/>
</dbReference>
<evidence type="ECO:0000255" key="1">
    <source>
        <dbReference type="PROSITE-ProRule" id="PRU00159"/>
    </source>
</evidence>
<evidence type="ECO:0000255" key="2">
    <source>
        <dbReference type="PROSITE-ProRule" id="PRU10027"/>
    </source>
</evidence>
<evidence type="ECO:0000256" key="3">
    <source>
        <dbReference type="SAM" id="MobiDB-lite"/>
    </source>
</evidence>
<sequence>MPDYEKVIEASGNGRYSKLNTVLGKGAYKVVYKAIDREEAINDNEITNVKVTRQEFKDLGHEIDILKSVRHPNIITFHDAWYNETEFVFITELMTSGTLREYIRKLTPLPNIKIVKRWCRQILKGLAYLHGHEPPIIHRDIKCDNIFINGAHGEIKIGDMGTAEMKNGKKYTVIGTPEFMAPEMYEEQGYNEKVDIYAFGMCLLEMATGEYPYGECTNAVQVFKKVTQTIKPECLSRVQDPELLTLVNICLTPEDERMTAQEILEHRFLAVEPEVVLVSKDMTMKLLTLQVVFKGMDKLSVKFEFNADTDTAADVVAEMIEEQVLQNCYQQLITCEINRILRDIARNQGPPDKGEDEKIVWRRENDIRSELERAKKDLALAVERVFEAEKKCELLEQHNIIAEERCKETIFALEQAKFQIPDLLQPQPQPQPQPQPQPQPQPQFQLQPQLQYLSPQSTTSPGPTSDDNSTNSTMLSSLESELSKLCVSGDEQVETTTHSALMENVLAGKAKYYEYSNDTSIDKFVMDTAGATNRSKDKQKQWAAKLQDQDIMTVGDLRDLHDEDWSGIGLTVFALRALKNMLAGKKAAVTQRGLQGTRSGASTPVEEQEQELM</sequence>